<name>YL498_MIMIV</name>
<organismHost>
    <name type="scientific">Acanthamoeba polyphaga</name>
    <name type="common">Amoeba</name>
    <dbReference type="NCBI Taxonomy" id="5757"/>
</organismHost>
<dbReference type="EC" id="1.-.-.-"/>
<dbReference type="EMBL" id="AY653733">
    <property type="protein sequence ID" value="AAV50763.1"/>
    <property type="molecule type" value="Genomic_DNA"/>
</dbReference>
<dbReference type="SMR" id="Q5UQG2"/>
<dbReference type="KEGG" id="vg:9925129"/>
<dbReference type="OrthoDB" id="7564at10239"/>
<dbReference type="Proteomes" id="UP000001134">
    <property type="component" value="Genome"/>
</dbReference>
<dbReference type="GO" id="GO:0030430">
    <property type="term" value="C:host cell cytoplasm"/>
    <property type="evidence" value="ECO:0007669"/>
    <property type="project" value="UniProtKB-SubCell"/>
</dbReference>
<dbReference type="GO" id="GO:0044423">
    <property type="term" value="C:virion component"/>
    <property type="evidence" value="ECO:0007669"/>
    <property type="project" value="UniProtKB-KW"/>
</dbReference>
<dbReference type="GO" id="GO:0016616">
    <property type="term" value="F:oxidoreductase activity, acting on the CH-OH group of donors, NAD or NADP as acceptor"/>
    <property type="evidence" value="ECO:0007669"/>
    <property type="project" value="InterPro"/>
</dbReference>
<dbReference type="GO" id="GO:0008270">
    <property type="term" value="F:zinc ion binding"/>
    <property type="evidence" value="ECO:0007669"/>
    <property type="project" value="InterPro"/>
</dbReference>
<dbReference type="CDD" id="cd05283">
    <property type="entry name" value="CAD1"/>
    <property type="match status" value="1"/>
</dbReference>
<dbReference type="FunFam" id="3.40.50.720:FF:000022">
    <property type="entry name" value="Cinnamyl alcohol dehydrogenase"/>
    <property type="match status" value="1"/>
</dbReference>
<dbReference type="Gene3D" id="3.90.180.10">
    <property type="entry name" value="Medium-chain alcohol dehydrogenases, catalytic domain"/>
    <property type="match status" value="1"/>
</dbReference>
<dbReference type="Gene3D" id="3.40.50.720">
    <property type="entry name" value="NAD(P)-binding Rossmann-like Domain"/>
    <property type="match status" value="1"/>
</dbReference>
<dbReference type="InterPro" id="IPR013149">
    <property type="entry name" value="ADH-like_C"/>
</dbReference>
<dbReference type="InterPro" id="IPR013154">
    <property type="entry name" value="ADH-like_N"/>
</dbReference>
<dbReference type="InterPro" id="IPR002328">
    <property type="entry name" value="ADH_Zn_CS"/>
</dbReference>
<dbReference type="InterPro" id="IPR047109">
    <property type="entry name" value="CAD-like"/>
</dbReference>
<dbReference type="InterPro" id="IPR011032">
    <property type="entry name" value="GroES-like_sf"/>
</dbReference>
<dbReference type="InterPro" id="IPR036291">
    <property type="entry name" value="NAD(P)-bd_dom_sf"/>
</dbReference>
<dbReference type="PANTHER" id="PTHR42683">
    <property type="entry name" value="ALDEHYDE REDUCTASE"/>
    <property type="match status" value="1"/>
</dbReference>
<dbReference type="Pfam" id="PF08240">
    <property type="entry name" value="ADH_N"/>
    <property type="match status" value="1"/>
</dbReference>
<dbReference type="Pfam" id="PF00107">
    <property type="entry name" value="ADH_zinc_N"/>
    <property type="match status" value="1"/>
</dbReference>
<dbReference type="SUPFAM" id="SSF50129">
    <property type="entry name" value="GroES-like"/>
    <property type="match status" value="1"/>
</dbReference>
<dbReference type="SUPFAM" id="SSF51735">
    <property type="entry name" value="NAD(P)-binding Rossmann-fold domains"/>
    <property type="match status" value="1"/>
</dbReference>
<dbReference type="PROSITE" id="PS00059">
    <property type="entry name" value="ADH_ZINC"/>
    <property type="match status" value="1"/>
</dbReference>
<gene>
    <name type="ordered locus">MIMI_L498</name>
</gene>
<accession>Q5UQG2</accession>
<comment type="cofactor">
    <cofactor evidence="1">
        <name>Zn(2+)</name>
        <dbReference type="ChEBI" id="CHEBI:29105"/>
    </cofactor>
    <text evidence="1">Binds 2 Zn(2+) ions per subunit.</text>
</comment>
<comment type="subcellular location">
    <subcellularLocation>
        <location evidence="1">Host cytoplasm</location>
    </subcellularLocation>
    <subcellularLocation>
        <location evidence="2">Virion</location>
    </subcellularLocation>
</comment>
<evidence type="ECO:0000250" key="1"/>
<evidence type="ECO:0000269" key="2">
    <source>
    </source>
</evidence>
<feature type="chain" id="PRO_0000160898" description="Probable zinc-type alcohol dehydrogenase-like protein L498">
    <location>
        <begin position="1"/>
        <end position="422"/>
    </location>
</feature>
<feature type="binding site" evidence="1">
    <location>
        <position position="108"/>
    </location>
    <ligand>
        <name>Zn(2+)</name>
        <dbReference type="ChEBI" id="CHEBI:29105"/>
        <label>1</label>
        <note>catalytic</note>
    </ligand>
</feature>
<feature type="binding site" evidence="1">
    <location>
        <position position="129"/>
    </location>
    <ligand>
        <name>Zn(2+)</name>
        <dbReference type="ChEBI" id="CHEBI:29105"/>
        <label>1</label>
        <note>catalytic</note>
    </ligand>
</feature>
<feature type="binding site" evidence="1">
    <location>
        <position position="160"/>
    </location>
    <ligand>
        <name>Zn(2+)</name>
        <dbReference type="ChEBI" id="CHEBI:29105"/>
        <label>2</label>
    </ligand>
</feature>
<feature type="binding site" evidence="1">
    <location>
        <position position="163"/>
    </location>
    <ligand>
        <name>Zn(2+)</name>
        <dbReference type="ChEBI" id="CHEBI:29105"/>
        <label>2</label>
    </ligand>
</feature>
<feature type="binding site" evidence="1">
    <location>
        <position position="166"/>
    </location>
    <ligand>
        <name>Zn(2+)</name>
        <dbReference type="ChEBI" id="CHEBI:29105"/>
        <label>2</label>
    </ligand>
</feature>
<feature type="binding site" evidence="1">
    <location>
        <position position="174"/>
    </location>
    <ligand>
        <name>Zn(2+)</name>
        <dbReference type="ChEBI" id="CHEBI:29105"/>
        <label>2</label>
    </ligand>
</feature>
<feature type="binding site" evidence="1">
    <location>
        <position position="231"/>
    </location>
    <ligand>
        <name>Zn(2+)</name>
        <dbReference type="ChEBI" id="CHEBI:29105"/>
        <label>1</label>
        <note>catalytic</note>
    </ligand>
</feature>
<keyword id="KW-1035">Host cytoplasm</keyword>
<keyword id="KW-0479">Metal-binding</keyword>
<keyword id="KW-0560">Oxidoreductase</keyword>
<keyword id="KW-1185">Reference proteome</keyword>
<keyword id="KW-0946">Virion</keyword>
<keyword id="KW-0862">Zinc</keyword>
<reference key="1">
    <citation type="journal article" date="2004" name="Science">
        <title>The 1.2-megabase genome sequence of Mimivirus.</title>
        <authorList>
            <person name="Raoult D."/>
            <person name="Audic S."/>
            <person name="Robert C."/>
            <person name="Abergel C."/>
            <person name="Renesto P."/>
            <person name="Ogata H."/>
            <person name="La Scola B."/>
            <person name="Susan M."/>
            <person name="Claverie J.-M."/>
        </authorList>
    </citation>
    <scope>NUCLEOTIDE SEQUENCE [LARGE SCALE GENOMIC DNA]</scope>
    <source>
        <strain>Rowbotham-Bradford</strain>
    </source>
</reference>
<reference key="2">
    <citation type="journal article" date="2006" name="J. Virol.">
        <title>Mimivirus giant particles incorporate a large fraction of anonymous and unique gene products.</title>
        <authorList>
            <person name="Renesto P."/>
            <person name="Abergel C."/>
            <person name="Decloquement P."/>
            <person name="Moinier D."/>
            <person name="Azza S."/>
            <person name="Ogata H."/>
            <person name="Fourquet P."/>
            <person name="Gorvel J.-P."/>
            <person name="Claverie J.-M."/>
            <person name="Raoult D."/>
        </authorList>
    </citation>
    <scope>IDENTIFICATION BY MASS SPECTROMETRY [LARGE SCALE ANALYSIS]</scope>
    <scope>SUBCELLULAR LOCATION</scope>
</reference>
<organism>
    <name type="scientific">Acanthamoeba polyphaga mimivirus</name>
    <name type="common">APMV</name>
    <dbReference type="NCBI Taxonomy" id="212035"/>
    <lineage>
        <taxon>Viruses</taxon>
        <taxon>Varidnaviria</taxon>
        <taxon>Bamfordvirae</taxon>
        <taxon>Nucleocytoviricota</taxon>
        <taxon>Megaviricetes</taxon>
        <taxon>Imitervirales</taxon>
        <taxon>Mimiviridae</taxon>
        <taxon>Megamimivirinae</taxon>
        <taxon>Mimivirus</taxon>
        <taxon>Mimivirus bradfordmassiliense</taxon>
    </lineage>
</organism>
<sequence length="422" mass="47285">MSLEEKLNKYSNKLSMTNNLNKIDVYNKKINKYKERQIYSNLKKPQPIDESVISLYSLKNEYQKSPDKMTALGFGVTDVGKPVELLVFDRKKPTNNEVSIEIYYTGICHSDWHFIVGEWKADFPLIPGHELIGRVIDIGPNVDKYSIGDIVCVSPVIDSCGHCKMCTHHIEQHCMNGATEIYNQKTRLPGDIKPSGPITYGGYSNIVIIKQHFVYKFPKNLDIERCAPLMCAGATTYSPLRQAKVGPGMKVGIVGIGGLGHIAVKIAKAMGAHVVAITRTEWKFKDSVNNLGANESILSTNVWQMNQHKGSFDFILSTIPMAHDIVPYIELLKYKATICTVGELFPTVINGMDLAQHPCFLQSSLIAGSDEIKEMLAFCSEHNIMPDVQIIKADKINDTRQKLLESKAKYRYVIDIRASLNK</sequence>
<protein>
    <recommendedName>
        <fullName>Probable zinc-type alcohol dehydrogenase-like protein L498</fullName>
        <ecNumber>1.-.-.-</ecNumber>
    </recommendedName>
</protein>
<proteinExistence type="evidence at protein level"/>